<comment type="function">
    <text evidence="1 9">Filament-forming cytoskeletal GTPase (By similarity). May play a role in cytokinesis (Potential).</text>
</comment>
<comment type="subunit">
    <text evidence="1">Septins polymerize into heterooligomeric protein complexes that form filaments, and can associate with cellular membranes, actin filaments and microtubules. GTPase activity is required for filament formation (By similarity).</text>
</comment>
<comment type="subcellular location">
    <subcellularLocation>
        <location>Cytoplasm</location>
    </subcellularLocation>
    <subcellularLocation>
        <location evidence="1">Cytoplasm</location>
        <location evidence="1">Cytoskeleton</location>
    </subcellularLocation>
    <subcellularLocation>
        <location evidence="1">Synapse</location>
    </subcellularLocation>
</comment>
<comment type="alternative products">
    <event type="alternative splicing"/>
    <isoform>
        <id>Q9Z1S5-1</id>
        <name>1</name>
        <sequence type="displayed"/>
    </isoform>
    <isoform>
        <id>Q9Z1S5-2</id>
        <name>2</name>
        <sequence type="described" ref="VSP_025400"/>
    </isoform>
</comment>
<comment type="tissue specificity">
    <text evidence="6">Expressed in the brain including the cerebrum, hippocampus and cerebellum (at protein level).</text>
</comment>
<comment type="developmental stage">
    <text evidence="6">Expressed in the cerebral cortex from 13.5 dpc to P30, expression peaks at P15.</text>
</comment>
<comment type="PTM">
    <text evidence="1">Phosphorylated by PKG on serine residues. Phosphorylated by PKG on Ser-91 (By similarity).</text>
</comment>
<comment type="similarity">
    <text evidence="4">Belongs to the TRAFAC class TrmE-Era-EngA-EngB-Septin-like GTPase superfamily. Septin GTPase family.</text>
</comment>
<comment type="sequence caution" evidence="9">
    <conflict type="frameshift">
        <sequence resource="EMBL-CDS" id="AAD02884"/>
    </conflict>
</comment>
<accession>Q9Z1S5</accession>
<accession>Q3TNZ2</accession>
<accession>Q7TNT7</accession>
<gene>
    <name evidence="7" type="primary">Septin3</name>
    <name evidence="7" type="synonym">Sep3</name>
    <name evidence="10" type="synonym">Sept3</name>
</gene>
<feature type="chain" id="PRO_0000173518" description="Neuronal-specific septin-3">
    <location>
        <begin position="1"/>
        <end position="350"/>
    </location>
</feature>
<feature type="domain" description="Septin-type G" evidence="4">
    <location>
        <begin position="58"/>
        <end position="331"/>
    </location>
</feature>
<feature type="region of interest" description="Disordered" evidence="5">
    <location>
        <begin position="1"/>
        <end position="29"/>
    </location>
</feature>
<feature type="region of interest" description="G1 motif" evidence="4">
    <location>
        <begin position="68"/>
        <end position="75"/>
    </location>
</feature>
<feature type="region of interest" description="G3 motif" evidence="4">
    <location>
        <begin position="125"/>
        <end position="128"/>
    </location>
</feature>
<feature type="region of interest" description="G4 motif" evidence="4">
    <location>
        <begin position="207"/>
        <end position="210"/>
    </location>
</feature>
<feature type="region of interest" description="Disordered" evidence="5">
    <location>
        <begin position="328"/>
        <end position="350"/>
    </location>
</feature>
<feature type="compositionally biased region" description="Basic and acidic residues" evidence="5">
    <location>
        <begin position="1"/>
        <end position="10"/>
    </location>
</feature>
<feature type="binding site" evidence="2">
    <location>
        <begin position="68"/>
        <end position="75"/>
    </location>
    <ligand>
        <name>GTP</name>
        <dbReference type="ChEBI" id="CHEBI:37565"/>
    </ligand>
</feature>
<feature type="binding site" evidence="2">
    <location>
        <position position="102"/>
    </location>
    <ligand>
        <name>GTP</name>
        <dbReference type="ChEBI" id="CHEBI:37565"/>
    </ligand>
</feature>
<feature type="binding site" evidence="2">
    <location>
        <begin position="208"/>
        <end position="216"/>
    </location>
    <ligand>
        <name>GTP</name>
        <dbReference type="ChEBI" id="CHEBI:37565"/>
    </ligand>
</feature>
<feature type="binding site" evidence="2">
    <location>
        <position position="265"/>
    </location>
    <ligand>
        <name>GTP</name>
        <dbReference type="ChEBI" id="CHEBI:37565"/>
    </ligand>
</feature>
<feature type="binding site" evidence="2">
    <location>
        <position position="280"/>
    </location>
    <ligand>
        <name>GTP</name>
        <dbReference type="ChEBI" id="CHEBI:37565"/>
    </ligand>
</feature>
<feature type="modified residue" description="Phosphoserine" evidence="3">
    <location>
        <position position="91"/>
    </location>
</feature>
<feature type="splice variant" id="VSP_025400" description="In isoform 2." evidence="7 8">
    <location>
        <begin position="1"/>
        <end position="13"/>
    </location>
</feature>
<feature type="sequence conflict" description="In Ref. 1; AAD02884." evidence="9" ref="1">
    <original>KQRVRKELEVNGIEF</original>
    <variation>LPSEGI</variation>
    <location>
        <begin position="221"/>
        <end position="235"/>
    </location>
</feature>
<proteinExistence type="evidence at protein level"/>
<organism>
    <name type="scientific">Mus musculus</name>
    <name type="common">Mouse</name>
    <dbReference type="NCBI Taxonomy" id="10090"/>
    <lineage>
        <taxon>Eukaryota</taxon>
        <taxon>Metazoa</taxon>
        <taxon>Chordata</taxon>
        <taxon>Craniata</taxon>
        <taxon>Vertebrata</taxon>
        <taxon>Euteleostomi</taxon>
        <taxon>Mammalia</taxon>
        <taxon>Eutheria</taxon>
        <taxon>Euarchontoglires</taxon>
        <taxon>Glires</taxon>
        <taxon>Rodentia</taxon>
        <taxon>Myomorpha</taxon>
        <taxon>Muroidea</taxon>
        <taxon>Muridae</taxon>
        <taxon>Murinae</taxon>
        <taxon>Mus</taxon>
        <taxon>Mus</taxon>
    </lineage>
</organism>
<name>SEPT3_MOUSE</name>
<evidence type="ECO:0000250" key="1"/>
<evidence type="ECO:0000250" key="2">
    <source>
        <dbReference type="UniProtKB" id="Q9UH03"/>
    </source>
</evidence>
<evidence type="ECO:0000250" key="3">
    <source>
        <dbReference type="UniProtKB" id="Q9WU34"/>
    </source>
</evidence>
<evidence type="ECO:0000255" key="4">
    <source>
        <dbReference type="PROSITE-ProRule" id="PRU01056"/>
    </source>
</evidence>
<evidence type="ECO:0000256" key="5">
    <source>
        <dbReference type="SAM" id="MobiDB-lite"/>
    </source>
</evidence>
<evidence type="ECO:0000269" key="6">
    <source>
    </source>
</evidence>
<evidence type="ECO:0000303" key="7">
    <source>
    </source>
</evidence>
<evidence type="ECO:0000303" key="8">
    <source>
    </source>
</evidence>
<evidence type="ECO:0000305" key="9"/>
<evidence type="ECO:0000312" key="10">
    <source>
        <dbReference type="MGI" id="MGI:1345148"/>
    </source>
</evidence>
<sequence>MSKGLPEARTDAAMSELVPEPRPKPAVPMKPVSINSNLLGYIGIDTIIEQMRKKTMKTGFDFNIMVVGQSGLGKSTLVNTLFKSQVSRKASSWNREEKIPKTVEIKAIGHVIEEGGVKMKLTVIDTPGFGDQINNENCWEPIEKYINEQYEKFLKEEVNIARKKRIPDTRVHCCLYFISPTGHSLRPLDLEFMKHLSKVVNIIPVIAKADTMTLEEKSEFKQRVRKELEVNGIEFYPQKEFDEDLEDKTENDKIRQESMPFAVVGSDKEYQVNGKRVLGRKTPWGIIEVENLNHCEFALLRDFVIRTHLQDLKEVTHNIHYETYRAKRLNDNGGLPPVSVDTEESHDSNP</sequence>
<protein>
    <recommendedName>
        <fullName>Neuronal-specific septin-3</fullName>
    </recommendedName>
</protein>
<dbReference type="EMBL" id="AF104411">
    <property type="protein sequence ID" value="AAD02884.1"/>
    <property type="status" value="ALT_FRAME"/>
    <property type="molecule type" value="mRNA"/>
</dbReference>
<dbReference type="EMBL" id="AK164861">
    <property type="protein sequence ID" value="BAE37945.1"/>
    <property type="molecule type" value="mRNA"/>
</dbReference>
<dbReference type="EMBL" id="AK169916">
    <property type="protein sequence ID" value="BAE41456.1"/>
    <property type="molecule type" value="mRNA"/>
</dbReference>
<dbReference type="EMBL" id="AK141915">
    <property type="protein sequence ID" value="BAE24884.1"/>
    <property type="molecule type" value="mRNA"/>
</dbReference>
<dbReference type="EMBL" id="BC055738">
    <property type="protein sequence ID" value="AAH55738.1"/>
    <property type="molecule type" value="mRNA"/>
</dbReference>
<dbReference type="CCDS" id="CCDS37157.1">
    <molecule id="Q9Z1S5-2"/>
</dbReference>
<dbReference type="RefSeq" id="NP_001355571.1">
    <molecule id="Q9Z1S5-1"/>
    <property type="nucleotide sequence ID" value="NM_001368642.1"/>
</dbReference>
<dbReference type="RefSeq" id="NP_036019.2">
    <molecule id="Q9Z1S5-2"/>
    <property type="nucleotide sequence ID" value="NM_011889.4"/>
</dbReference>
<dbReference type="SMR" id="Q9Z1S5"/>
<dbReference type="BioGRID" id="204863">
    <property type="interactions" value="17"/>
</dbReference>
<dbReference type="FunCoup" id="Q9Z1S5">
    <property type="interactions" value="298"/>
</dbReference>
<dbReference type="IntAct" id="Q9Z1S5">
    <property type="interactions" value="5"/>
</dbReference>
<dbReference type="STRING" id="10090.ENSMUSP00000023095"/>
<dbReference type="GlyGen" id="Q9Z1S5">
    <property type="glycosylation" value="1 site, 1 O-linked glycan (1 site)"/>
</dbReference>
<dbReference type="iPTMnet" id="Q9Z1S5"/>
<dbReference type="PhosphoSitePlus" id="Q9Z1S5"/>
<dbReference type="SwissPalm" id="Q9Z1S5"/>
<dbReference type="PaxDb" id="10090-ENSMUSP00000023095"/>
<dbReference type="PeptideAtlas" id="Q9Z1S5"/>
<dbReference type="ProteomicsDB" id="255380">
    <molecule id="Q9Z1S5-1"/>
</dbReference>
<dbReference type="ProteomicsDB" id="255381">
    <molecule id="Q9Z1S5-2"/>
</dbReference>
<dbReference type="Antibodypedia" id="290">
    <property type="antibodies" value="276 antibodies from 32 providers"/>
</dbReference>
<dbReference type="DNASU" id="24050"/>
<dbReference type="Ensembl" id="ENSMUST00000023095.14">
    <molecule id="Q9Z1S5-2"/>
    <property type="protein sequence ID" value="ENSMUSP00000023095.7"/>
    <property type="gene ID" value="ENSMUSG00000022456.19"/>
</dbReference>
<dbReference type="Ensembl" id="ENSMUST00000116423.3">
    <molecule id="Q9Z1S5-2"/>
    <property type="protein sequence ID" value="ENSMUSP00000112124.2"/>
    <property type="gene ID" value="ENSMUSG00000022456.19"/>
</dbReference>
<dbReference type="GeneID" id="24050"/>
<dbReference type="KEGG" id="mmu:24050"/>
<dbReference type="UCSC" id="uc007wyq.1">
    <molecule id="Q9Z1S5-1"/>
    <property type="organism name" value="mouse"/>
</dbReference>
<dbReference type="AGR" id="MGI:1345148"/>
<dbReference type="CTD" id="55964"/>
<dbReference type="MGI" id="MGI:1345148">
    <property type="gene designation" value="Septin3"/>
</dbReference>
<dbReference type="VEuPathDB" id="HostDB:ENSMUSG00000022456"/>
<dbReference type="eggNOG" id="KOG1547">
    <property type="taxonomic scope" value="Eukaryota"/>
</dbReference>
<dbReference type="GeneTree" id="ENSGT00940000158004"/>
<dbReference type="HOGENOM" id="CLU_017718_7_1_1"/>
<dbReference type="InParanoid" id="Q9Z1S5"/>
<dbReference type="OMA" id="QCEFVYL"/>
<dbReference type="PhylomeDB" id="Q9Z1S5"/>
<dbReference type="TreeFam" id="TF101078"/>
<dbReference type="BioGRID-ORCS" id="24050">
    <property type="hits" value="5 hits in 53 CRISPR screens"/>
</dbReference>
<dbReference type="CD-CODE" id="CE726F99">
    <property type="entry name" value="Postsynaptic density"/>
</dbReference>
<dbReference type="ChiTaRS" id="Sept3">
    <property type="organism name" value="mouse"/>
</dbReference>
<dbReference type="PRO" id="PR:Q9Z1S5"/>
<dbReference type="Proteomes" id="UP000000589">
    <property type="component" value="Chromosome 15"/>
</dbReference>
<dbReference type="RNAct" id="Q9Z1S5">
    <property type="molecule type" value="protein"/>
</dbReference>
<dbReference type="Bgee" id="ENSMUSG00000022456">
    <property type="expression patterns" value="Expressed in cortical plate and 207 other cell types or tissues"/>
</dbReference>
<dbReference type="ExpressionAtlas" id="Q9Z1S5">
    <property type="expression patterns" value="baseline and differential"/>
</dbReference>
<dbReference type="GO" id="GO:0098793">
    <property type="term" value="C:presynapse"/>
    <property type="evidence" value="ECO:0000314"/>
    <property type="project" value="UniProtKB"/>
</dbReference>
<dbReference type="GO" id="GO:0031105">
    <property type="term" value="C:septin complex"/>
    <property type="evidence" value="ECO:0000314"/>
    <property type="project" value="UniProtKB"/>
</dbReference>
<dbReference type="GO" id="GO:0005525">
    <property type="term" value="F:GTP binding"/>
    <property type="evidence" value="ECO:0007669"/>
    <property type="project" value="UniProtKB-KW"/>
</dbReference>
<dbReference type="GO" id="GO:0051301">
    <property type="term" value="P:cell division"/>
    <property type="evidence" value="ECO:0007669"/>
    <property type="project" value="UniProtKB-KW"/>
</dbReference>
<dbReference type="GO" id="GO:0140247">
    <property type="term" value="P:protein catabolic process at presynapse"/>
    <property type="evidence" value="ECO:0000314"/>
    <property type="project" value="SynGO"/>
</dbReference>
<dbReference type="CDD" id="cd01850">
    <property type="entry name" value="CDC_Septin"/>
    <property type="match status" value="1"/>
</dbReference>
<dbReference type="FunFam" id="3.40.50.300:FF:000387">
    <property type="entry name" value="neuronal-specific septin-3 isoform X1"/>
    <property type="match status" value="1"/>
</dbReference>
<dbReference type="Gene3D" id="3.40.50.300">
    <property type="entry name" value="P-loop containing nucleotide triphosphate hydrolases"/>
    <property type="match status" value="1"/>
</dbReference>
<dbReference type="InterPro" id="IPR030379">
    <property type="entry name" value="G_SEPTIN_dom"/>
</dbReference>
<dbReference type="InterPro" id="IPR027417">
    <property type="entry name" value="P-loop_NTPase"/>
</dbReference>
<dbReference type="InterPro" id="IPR016491">
    <property type="entry name" value="Septin"/>
</dbReference>
<dbReference type="InterPro" id="IPR008114">
    <property type="entry name" value="Septin3"/>
</dbReference>
<dbReference type="PANTHER" id="PTHR18884">
    <property type="entry name" value="SEPTIN"/>
    <property type="match status" value="1"/>
</dbReference>
<dbReference type="Pfam" id="PF00735">
    <property type="entry name" value="Septin"/>
    <property type="match status" value="1"/>
</dbReference>
<dbReference type="PIRSF" id="PIRSF006698">
    <property type="entry name" value="Septin"/>
    <property type="match status" value="1"/>
</dbReference>
<dbReference type="PRINTS" id="PR01741">
    <property type="entry name" value="SEPTIN3"/>
</dbReference>
<dbReference type="SUPFAM" id="SSF52540">
    <property type="entry name" value="P-loop containing nucleoside triphosphate hydrolases"/>
    <property type="match status" value="1"/>
</dbReference>
<dbReference type="PROSITE" id="PS51719">
    <property type="entry name" value="G_SEPTIN"/>
    <property type="match status" value="1"/>
</dbReference>
<reference key="1">
    <citation type="journal article" date="1999" name="Mech. Dev.">
        <title>Retroviral promoter-trap insertion into a novel mammalian septin gene expressed during mouse neuronal development.</title>
        <authorList>
            <person name="Xiong J.-W."/>
            <person name="Leahy A."/>
            <person name="Stuhlmann H."/>
        </authorList>
    </citation>
    <scope>NUCLEOTIDE SEQUENCE [MRNA] (ISOFORM 2)</scope>
</reference>
<reference key="2">
    <citation type="journal article" date="2005" name="Science">
        <title>The transcriptional landscape of the mammalian genome.</title>
        <authorList>
            <person name="Carninci P."/>
            <person name="Kasukawa T."/>
            <person name="Katayama S."/>
            <person name="Gough J."/>
            <person name="Frith M.C."/>
            <person name="Maeda N."/>
            <person name="Oyama R."/>
            <person name="Ravasi T."/>
            <person name="Lenhard B."/>
            <person name="Wells C."/>
            <person name="Kodzius R."/>
            <person name="Shimokawa K."/>
            <person name="Bajic V.B."/>
            <person name="Brenner S.E."/>
            <person name="Batalov S."/>
            <person name="Forrest A.R."/>
            <person name="Zavolan M."/>
            <person name="Davis M.J."/>
            <person name="Wilming L.G."/>
            <person name="Aidinis V."/>
            <person name="Allen J.E."/>
            <person name="Ambesi-Impiombato A."/>
            <person name="Apweiler R."/>
            <person name="Aturaliya R.N."/>
            <person name="Bailey T.L."/>
            <person name="Bansal M."/>
            <person name="Baxter L."/>
            <person name="Beisel K.W."/>
            <person name="Bersano T."/>
            <person name="Bono H."/>
            <person name="Chalk A.M."/>
            <person name="Chiu K.P."/>
            <person name="Choudhary V."/>
            <person name="Christoffels A."/>
            <person name="Clutterbuck D.R."/>
            <person name="Crowe M.L."/>
            <person name="Dalla E."/>
            <person name="Dalrymple B.P."/>
            <person name="de Bono B."/>
            <person name="Della Gatta G."/>
            <person name="di Bernardo D."/>
            <person name="Down T."/>
            <person name="Engstrom P."/>
            <person name="Fagiolini M."/>
            <person name="Faulkner G."/>
            <person name="Fletcher C.F."/>
            <person name="Fukushima T."/>
            <person name="Furuno M."/>
            <person name="Futaki S."/>
            <person name="Gariboldi M."/>
            <person name="Georgii-Hemming P."/>
            <person name="Gingeras T.R."/>
            <person name="Gojobori T."/>
            <person name="Green R.E."/>
            <person name="Gustincich S."/>
            <person name="Harbers M."/>
            <person name="Hayashi Y."/>
            <person name="Hensch T.K."/>
            <person name="Hirokawa N."/>
            <person name="Hill D."/>
            <person name="Huminiecki L."/>
            <person name="Iacono M."/>
            <person name="Ikeo K."/>
            <person name="Iwama A."/>
            <person name="Ishikawa T."/>
            <person name="Jakt M."/>
            <person name="Kanapin A."/>
            <person name="Katoh M."/>
            <person name="Kawasawa Y."/>
            <person name="Kelso J."/>
            <person name="Kitamura H."/>
            <person name="Kitano H."/>
            <person name="Kollias G."/>
            <person name="Krishnan S.P."/>
            <person name="Kruger A."/>
            <person name="Kummerfeld S.K."/>
            <person name="Kurochkin I.V."/>
            <person name="Lareau L.F."/>
            <person name="Lazarevic D."/>
            <person name="Lipovich L."/>
            <person name="Liu J."/>
            <person name="Liuni S."/>
            <person name="McWilliam S."/>
            <person name="Madan Babu M."/>
            <person name="Madera M."/>
            <person name="Marchionni L."/>
            <person name="Matsuda H."/>
            <person name="Matsuzawa S."/>
            <person name="Miki H."/>
            <person name="Mignone F."/>
            <person name="Miyake S."/>
            <person name="Morris K."/>
            <person name="Mottagui-Tabar S."/>
            <person name="Mulder N."/>
            <person name="Nakano N."/>
            <person name="Nakauchi H."/>
            <person name="Ng P."/>
            <person name="Nilsson R."/>
            <person name="Nishiguchi S."/>
            <person name="Nishikawa S."/>
            <person name="Nori F."/>
            <person name="Ohara O."/>
            <person name="Okazaki Y."/>
            <person name="Orlando V."/>
            <person name="Pang K.C."/>
            <person name="Pavan W.J."/>
            <person name="Pavesi G."/>
            <person name="Pesole G."/>
            <person name="Petrovsky N."/>
            <person name="Piazza S."/>
            <person name="Reed J."/>
            <person name="Reid J.F."/>
            <person name="Ring B.Z."/>
            <person name="Ringwald M."/>
            <person name="Rost B."/>
            <person name="Ruan Y."/>
            <person name="Salzberg S.L."/>
            <person name="Sandelin A."/>
            <person name="Schneider C."/>
            <person name="Schoenbach C."/>
            <person name="Sekiguchi K."/>
            <person name="Semple C.A."/>
            <person name="Seno S."/>
            <person name="Sessa L."/>
            <person name="Sheng Y."/>
            <person name="Shibata Y."/>
            <person name="Shimada H."/>
            <person name="Shimada K."/>
            <person name="Silva D."/>
            <person name="Sinclair B."/>
            <person name="Sperling S."/>
            <person name="Stupka E."/>
            <person name="Sugiura K."/>
            <person name="Sultana R."/>
            <person name="Takenaka Y."/>
            <person name="Taki K."/>
            <person name="Tammoja K."/>
            <person name="Tan S.L."/>
            <person name="Tang S."/>
            <person name="Taylor M.S."/>
            <person name="Tegner J."/>
            <person name="Teichmann S.A."/>
            <person name="Ueda H.R."/>
            <person name="van Nimwegen E."/>
            <person name="Verardo R."/>
            <person name="Wei C.L."/>
            <person name="Yagi K."/>
            <person name="Yamanishi H."/>
            <person name="Zabarovsky E."/>
            <person name="Zhu S."/>
            <person name="Zimmer A."/>
            <person name="Hide W."/>
            <person name="Bult C."/>
            <person name="Grimmond S.M."/>
            <person name="Teasdale R.D."/>
            <person name="Liu E.T."/>
            <person name="Brusic V."/>
            <person name="Quackenbush J."/>
            <person name="Wahlestedt C."/>
            <person name="Mattick J.S."/>
            <person name="Hume D.A."/>
            <person name="Kai C."/>
            <person name="Sasaki D."/>
            <person name="Tomaru Y."/>
            <person name="Fukuda S."/>
            <person name="Kanamori-Katayama M."/>
            <person name="Suzuki M."/>
            <person name="Aoki J."/>
            <person name="Arakawa T."/>
            <person name="Iida J."/>
            <person name="Imamura K."/>
            <person name="Itoh M."/>
            <person name="Kato T."/>
            <person name="Kawaji H."/>
            <person name="Kawagashira N."/>
            <person name="Kawashima T."/>
            <person name="Kojima M."/>
            <person name="Kondo S."/>
            <person name="Konno H."/>
            <person name="Nakano K."/>
            <person name="Ninomiya N."/>
            <person name="Nishio T."/>
            <person name="Okada M."/>
            <person name="Plessy C."/>
            <person name="Shibata K."/>
            <person name="Shiraki T."/>
            <person name="Suzuki S."/>
            <person name="Tagami M."/>
            <person name="Waki K."/>
            <person name="Watahiki A."/>
            <person name="Okamura-Oho Y."/>
            <person name="Suzuki H."/>
            <person name="Kawai J."/>
            <person name="Hayashizaki Y."/>
        </authorList>
    </citation>
    <scope>NUCLEOTIDE SEQUENCE [LARGE SCALE MRNA] (ISOFORM 1)</scope>
    <source>
        <strain>C57BL/6J</strain>
        <strain>NOD</strain>
        <tissue>Head</tissue>
        <tissue>Spinal ganglion</tissue>
    </source>
</reference>
<reference key="3">
    <citation type="journal article" date="2004" name="Genome Res.">
        <title>The status, quality, and expansion of the NIH full-length cDNA project: the Mammalian Gene Collection (MGC).</title>
        <authorList>
            <consortium name="The MGC Project Team"/>
        </authorList>
    </citation>
    <scope>NUCLEOTIDE SEQUENCE [LARGE SCALE MRNA] (ISOFORM 2)</scope>
    <source>
        <strain>C57BL/6J</strain>
        <tissue>Brain</tissue>
    </source>
</reference>
<reference key="4">
    <citation type="submission" date="2007-04" db="UniProtKB">
        <authorList>
            <person name="Lubec G."/>
            <person name="Klug S."/>
            <person name="Kang S.U."/>
        </authorList>
    </citation>
    <scope>PROTEIN SEQUENCE OF 132-139; 186-204 AND 314-325</scope>
    <scope>IDENTIFICATION BY MASS SPECTROMETRY</scope>
    <source>
        <strain>C57BL/6J</strain>
        <tissue>Brain</tissue>
        <tissue>Hippocampus</tissue>
    </source>
</reference>
<reference key="5">
    <citation type="journal article" date="2010" name="Cell">
        <title>A tissue-specific atlas of mouse protein phosphorylation and expression.</title>
        <authorList>
            <person name="Huttlin E.L."/>
            <person name="Jedrychowski M.P."/>
            <person name="Elias J.E."/>
            <person name="Goswami T."/>
            <person name="Rad R."/>
            <person name="Beausoleil S.A."/>
            <person name="Villen J."/>
            <person name="Haas W."/>
            <person name="Sowa M.E."/>
            <person name="Gygi S.P."/>
        </authorList>
    </citation>
    <scope>IDENTIFICATION BY MASS SPECTROMETRY [LARGE SCALE ANALYSIS]</scope>
    <source>
        <tissue>Brain</tissue>
    </source>
</reference>
<reference key="6">
    <citation type="journal article" date="2010" name="Mol. Biol. Cell">
        <title>Septin 14 is involved in cortical neuronal migration via interaction with Septin 4.</title>
        <authorList>
            <person name="Shinoda T."/>
            <person name="Ito H."/>
            <person name="Sudo K."/>
            <person name="Iwamoto I."/>
            <person name="Morishita R."/>
            <person name="Nagata K."/>
        </authorList>
    </citation>
    <scope>TISSUE SPECIFICITY</scope>
    <scope>DEVELOPMENTAL STAGE</scope>
</reference>
<keyword id="KW-0025">Alternative splicing</keyword>
<keyword id="KW-0131">Cell cycle</keyword>
<keyword id="KW-0132">Cell division</keyword>
<keyword id="KW-0963">Cytoplasm</keyword>
<keyword id="KW-0206">Cytoskeleton</keyword>
<keyword id="KW-0903">Direct protein sequencing</keyword>
<keyword id="KW-0342">GTP-binding</keyword>
<keyword id="KW-0547">Nucleotide-binding</keyword>
<keyword id="KW-0597">Phosphoprotein</keyword>
<keyword id="KW-1185">Reference proteome</keyword>
<keyword id="KW-0770">Synapse</keyword>